<evidence type="ECO:0000255" key="1">
    <source>
        <dbReference type="HAMAP-Rule" id="MF_00558"/>
    </source>
</evidence>
<proteinExistence type="inferred from homology"/>
<organism>
    <name type="scientific">Aeromonas salmonicida (strain A449)</name>
    <dbReference type="NCBI Taxonomy" id="382245"/>
    <lineage>
        <taxon>Bacteria</taxon>
        <taxon>Pseudomonadati</taxon>
        <taxon>Pseudomonadota</taxon>
        <taxon>Gammaproteobacteria</taxon>
        <taxon>Aeromonadales</taxon>
        <taxon>Aeromonadaceae</taxon>
        <taxon>Aeromonas</taxon>
    </lineage>
</organism>
<sequence length="388" mass="41407">MNLHEYQAKKLFAEYGLPVSEGYACATPQEAAEAADKIGGTTWVVKCQVHAGGRGKAGGVKLAKSKDEIRAFAQNWLGKNLVTYQTDANGQPVTKILVESCTDIAKELYLGAVVDRGSRRVVFMASTEGGVDIEKIAHETPELIHKAAIDPLVGPQAYQARELAFKLGLVGDQIKQFTKIFMGLGQMFLDCDFALLEINPLVITAQGNLHCLDGKINIDANALYRQPKLREMHDPSQDDPREAHAAQWELNYVALDGNIGCMVNGAGLAMGTMDIVNLHGGSPANFLDVGGGATKERVTEAFKIILSDSKVQAVLVNIFGGIVRCDMIAEGIIGAVKEVGVKVPVVVRLEGNNAELGARKLADSGLNIIAATSLTDAAQQVVKAAEAK</sequence>
<protein>
    <recommendedName>
        <fullName evidence="1">Succinate--CoA ligase [ADP-forming] subunit beta</fullName>
        <ecNumber evidence="1">6.2.1.5</ecNumber>
    </recommendedName>
    <alternativeName>
        <fullName evidence="1">Succinyl-CoA synthetase subunit beta</fullName>
        <shortName evidence="1">SCS-beta</shortName>
    </alternativeName>
</protein>
<dbReference type="EC" id="6.2.1.5" evidence="1"/>
<dbReference type="EMBL" id="CP000644">
    <property type="protein sequence ID" value="ABO90404.1"/>
    <property type="molecule type" value="Genomic_DNA"/>
</dbReference>
<dbReference type="RefSeq" id="WP_005310904.1">
    <property type="nucleotide sequence ID" value="NC_009348.1"/>
</dbReference>
<dbReference type="SMR" id="A4SND2"/>
<dbReference type="STRING" id="29491.GCA_000820065_01574"/>
<dbReference type="KEGG" id="asa:ASA_2355"/>
<dbReference type="eggNOG" id="COG0045">
    <property type="taxonomic scope" value="Bacteria"/>
</dbReference>
<dbReference type="HOGENOM" id="CLU_037430_0_2_6"/>
<dbReference type="UniPathway" id="UPA00223">
    <property type="reaction ID" value="UER00999"/>
</dbReference>
<dbReference type="Proteomes" id="UP000000225">
    <property type="component" value="Chromosome"/>
</dbReference>
<dbReference type="GO" id="GO:0005829">
    <property type="term" value="C:cytosol"/>
    <property type="evidence" value="ECO:0007669"/>
    <property type="project" value="TreeGrafter"/>
</dbReference>
<dbReference type="GO" id="GO:0042709">
    <property type="term" value="C:succinate-CoA ligase complex"/>
    <property type="evidence" value="ECO:0007669"/>
    <property type="project" value="TreeGrafter"/>
</dbReference>
<dbReference type="GO" id="GO:0005524">
    <property type="term" value="F:ATP binding"/>
    <property type="evidence" value="ECO:0007669"/>
    <property type="project" value="UniProtKB-UniRule"/>
</dbReference>
<dbReference type="GO" id="GO:0000287">
    <property type="term" value="F:magnesium ion binding"/>
    <property type="evidence" value="ECO:0007669"/>
    <property type="project" value="UniProtKB-UniRule"/>
</dbReference>
<dbReference type="GO" id="GO:0004775">
    <property type="term" value="F:succinate-CoA ligase (ADP-forming) activity"/>
    <property type="evidence" value="ECO:0007669"/>
    <property type="project" value="UniProtKB-UniRule"/>
</dbReference>
<dbReference type="GO" id="GO:0004776">
    <property type="term" value="F:succinate-CoA ligase (GDP-forming) activity"/>
    <property type="evidence" value="ECO:0007669"/>
    <property type="project" value="RHEA"/>
</dbReference>
<dbReference type="GO" id="GO:0006104">
    <property type="term" value="P:succinyl-CoA metabolic process"/>
    <property type="evidence" value="ECO:0007669"/>
    <property type="project" value="TreeGrafter"/>
</dbReference>
<dbReference type="GO" id="GO:0006099">
    <property type="term" value="P:tricarboxylic acid cycle"/>
    <property type="evidence" value="ECO:0007669"/>
    <property type="project" value="UniProtKB-UniRule"/>
</dbReference>
<dbReference type="FunFam" id="3.30.1490.20:FF:000002">
    <property type="entry name" value="Succinate--CoA ligase [ADP-forming] subunit beta"/>
    <property type="match status" value="1"/>
</dbReference>
<dbReference type="FunFam" id="3.30.470.20:FF:000002">
    <property type="entry name" value="Succinate--CoA ligase [ADP-forming] subunit beta"/>
    <property type="match status" value="1"/>
</dbReference>
<dbReference type="FunFam" id="3.40.50.261:FF:000001">
    <property type="entry name" value="Succinate--CoA ligase [ADP-forming] subunit beta"/>
    <property type="match status" value="1"/>
</dbReference>
<dbReference type="Gene3D" id="3.30.1490.20">
    <property type="entry name" value="ATP-grasp fold, A domain"/>
    <property type="match status" value="1"/>
</dbReference>
<dbReference type="Gene3D" id="3.30.470.20">
    <property type="entry name" value="ATP-grasp fold, B domain"/>
    <property type="match status" value="1"/>
</dbReference>
<dbReference type="Gene3D" id="3.40.50.261">
    <property type="entry name" value="Succinyl-CoA synthetase domains"/>
    <property type="match status" value="1"/>
</dbReference>
<dbReference type="HAMAP" id="MF_00558">
    <property type="entry name" value="Succ_CoA_beta"/>
    <property type="match status" value="1"/>
</dbReference>
<dbReference type="InterPro" id="IPR011761">
    <property type="entry name" value="ATP-grasp"/>
</dbReference>
<dbReference type="InterPro" id="IPR013650">
    <property type="entry name" value="ATP-grasp_succ-CoA_synth-type"/>
</dbReference>
<dbReference type="InterPro" id="IPR013815">
    <property type="entry name" value="ATP_grasp_subdomain_1"/>
</dbReference>
<dbReference type="InterPro" id="IPR017866">
    <property type="entry name" value="Succ-CoA_synthase_bsu_CS"/>
</dbReference>
<dbReference type="InterPro" id="IPR005811">
    <property type="entry name" value="SUCC_ACL_C"/>
</dbReference>
<dbReference type="InterPro" id="IPR005809">
    <property type="entry name" value="Succ_CoA_ligase-like_bsu"/>
</dbReference>
<dbReference type="InterPro" id="IPR016102">
    <property type="entry name" value="Succinyl-CoA_synth-like"/>
</dbReference>
<dbReference type="NCBIfam" id="NF001913">
    <property type="entry name" value="PRK00696.1"/>
    <property type="match status" value="1"/>
</dbReference>
<dbReference type="NCBIfam" id="TIGR01016">
    <property type="entry name" value="sucCoAbeta"/>
    <property type="match status" value="1"/>
</dbReference>
<dbReference type="PANTHER" id="PTHR11815:SF10">
    <property type="entry name" value="SUCCINATE--COA LIGASE [GDP-FORMING] SUBUNIT BETA, MITOCHONDRIAL"/>
    <property type="match status" value="1"/>
</dbReference>
<dbReference type="PANTHER" id="PTHR11815">
    <property type="entry name" value="SUCCINYL-COA SYNTHETASE BETA CHAIN"/>
    <property type="match status" value="1"/>
</dbReference>
<dbReference type="Pfam" id="PF08442">
    <property type="entry name" value="ATP-grasp_2"/>
    <property type="match status" value="1"/>
</dbReference>
<dbReference type="Pfam" id="PF00549">
    <property type="entry name" value="Ligase_CoA"/>
    <property type="match status" value="1"/>
</dbReference>
<dbReference type="PIRSF" id="PIRSF001554">
    <property type="entry name" value="SucCS_beta"/>
    <property type="match status" value="1"/>
</dbReference>
<dbReference type="SUPFAM" id="SSF56059">
    <property type="entry name" value="Glutathione synthetase ATP-binding domain-like"/>
    <property type="match status" value="1"/>
</dbReference>
<dbReference type="SUPFAM" id="SSF52210">
    <property type="entry name" value="Succinyl-CoA synthetase domains"/>
    <property type="match status" value="1"/>
</dbReference>
<dbReference type="PROSITE" id="PS50975">
    <property type="entry name" value="ATP_GRASP"/>
    <property type="match status" value="1"/>
</dbReference>
<dbReference type="PROSITE" id="PS01217">
    <property type="entry name" value="SUCCINYL_COA_LIG_3"/>
    <property type="match status" value="1"/>
</dbReference>
<name>SUCC_AERS4</name>
<comment type="function">
    <text evidence="1">Succinyl-CoA synthetase functions in the citric acid cycle (TCA), coupling the hydrolysis of succinyl-CoA to the synthesis of either ATP or GTP and thus represents the only step of substrate-level phosphorylation in the TCA. The beta subunit provides nucleotide specificity of the enzyme and binds the substrate succinate, while the binding sites for coenzyme A and phosphate are found in the alpha subunit.</text>
</comment>
<comment type="catalytic activity">
    <reaction evidence="1">
        <text>succinate + ATP + CoA = succinyl-CoA + ADP + phosphate</text>
        <dbReference type="Rhea" id="RHEA:17661"/>
        <dbReference type="ChEBI" id="CHEBI:30031"/>
        <dbReference type="ChEBI" id="CHEBI:30616"/>
        <dbReference type="ChEBI" id="CHEBI:43474"/>
        <dbReference type="ChEBI" id="CHEBI:57287"/>
        <dbReference type="ChEBI" id="CHEBI:57292"/>
        <dbReference type="ChEBI" id="CHEBI:456216"/>
        <dbReference type="EC" id="6.2.1.5"/>
    </reaction>
    <physiologicalReaction direction="right-to-left" evidence="1">
        <dbReference type="Rhea" id="RHEA:17663"/>
    </physiologicalReaction>
</comment>
<comment type="catalytic activity">
    <reaction evidence="1">
        <text>GTP + succinate + CoA = succinyl-CoA + GDP + phosphate</text>
        <dbReference type="Rhea" id="RHEA:22120"/>
        <dbReference type="ChEBI" id="CHEBI:30031"/>
        <dbReference type="ChEBI" id="CHEBI:37565"/>
        <dbReference type="ChEBI" id="CHEBI:43474"/>
        <dbReference type="ChEBI" id="CHEBI:57287"/>
        <dbReference type="ChEBI" id="CHEBI:57292"/>
        <dbReference type="ChEBI" id="CHEBI:58189"/>
    </reaction>
    <physiologicalReaction direction="right-to-left" evidence="1">
        <dbReference type="Rhea" id="RHEA:22122"/>
    </physiologicalReaction>
</comment>
<comment type="cofactor">
    <cofactor evidence="1">
        <name>Mg(2+)</name>
        <dbReference type="ChEBI" id="CHEBI:18420"/>
    </cofactor>
    <text evidence="1">Binds 1 Mg(2+) ion per subunit.</text>
</comment>
<comment type="pathway">
    <text evidence="1">Carbohydrate metabolism; tricarboxylic acid cycle; succinate from succinyl-CoA (ligase route): step 1/1.</text>
</comment>
<comment type="subunit">
    <text evidence="1">Heterotetramer of two alpha and two beta subunits.</text>
</comment>
<comment type="similarity">
    <text evidence="1">Belongs to the succinate/malate CoA ligase beta subunit family.</text>
</comment>
<feature type="chain" id="PRO_1000081993" description="Succinate--CoA ligase [ADP-forming] subunit beta">
    <location>
        <begin position="1"/>
        <end position="388"/>
    </location>
</feature>
<feature type="domain" description="ATP-grasp" evidence="1">
    <location>
        <begin position="9"/>
        <end position="244"/>
    </location>
</feature>
<feature type="binding site" evidence="1">
    <location>
        <position position="46"/>
    </location>
    <ligand>
        <name>ATP</name>
        <dbReference type="ChEBI" id="CHEBI:30616"/>
    </ligand>
</feature>
<feature type="binding site" evidence="1">
    <location>
        <begin position="53"/>
        <end position="55"/>
    </location>
    <ligand>
        <name>ATP</name>
        <dbReference type="ChEBI" id="CHEBI:30616"/>
    </ligand>
</feature>
<feature type="binding site" evidence="1">
    <location>
        <position position="99"/>
    </location>
    <ligand>
        <name>ATP</name>
        <dbReference type="ChEBI" id="CHEBI:30616"/>
    </ligand>
</feature>
<feature type="binding site" evidence="1">
    <location>
        <position position="102"/>
    </location>
    <ligand>
        <name>ATP</name>
        <dbReference type="ChEBI" id="CHEBI:30616"/>
    </ligand>
</feature>
<feature type="binding site" evidence="1">
    <location>
        <position position="107"/>
    </location>
    <ligand>
        <name>ATP</name>
        <dbReference type="ChEBI" id="CHEBI:30616"/>
    </ligand>
</feature>
<feature type="binding site" evidence="1">
    <location>
        <position position="199"/>
    </location>
    <ligand>
        <name>Mg(2+)</name>
        <dbReference type="ChEBI" id="CHEBI:18420"/>
    </ligand>
</feature>
<feature type="binding site" evidence="1">
    <location>
        <position position="213"/>
    </location>
    <ligand>
        <name>Mg(2+)</name>
        <dbReference type="ChEBI" id="CHEBI:18420"/>
    </ligand>
</feature>
<feature type="binding site" evidence="1">
    <location>
        <position position="264"/>
    </location>
    <ligand>
        <name>substrate</name>
        <note>ligand shared with subunit alpha</note>
    </ligand>
</feature>
<feature type="binding site" evidence="1">
    <location>
        <begin position="321"/>
        <end position="323"/>
    </location>
    <ligand>
        <name>substrate</name>
        <note>ligand shared with subunit alpha</note>
    </ligand>
</feature>
<reference key="1">
    <citation type="journal article" date="2008" name="BMC Genomics">
        <title>The genome of Aeromonas salmonicida subsp. salmonicida A449: insights into the evolution of a fish pathogen.</title>
        <authorList>
            <person name="Reith M.E."/>
            <person name="Singh R.K."/>
            <person name="Curtis B."/>
            <person name="Boyd J.M."/>
            <person name="Bouevitch A."/>
            <person name="Kimball J."/>
            <person name="Munholland J."/>
            <person name="Murphy C."/>
            <person name="Sarty D."/>
            <person name="Williams J."/>
            <person name="Nash J.H."/>
            <person name="Johnson S.C."/>
            <person name="Brown L.L."/>
        </authorList>
    </citation>
    <scope>NUCLEOTIDE SEQUENCE [LARGE SCALE GENOMIC DNA]</scope>
    <source>
        <strain>A449</strain>
    </source>
</reference>
<keyword id="KW-0067">ATP-binding</keyword>
<keyword id="KW-0436">Ligase</keyword>
<keyword id="KW-0460">Magnesium</keyword>
<keyword id="KW-0479">Metal-binding</keyword>
<keyword id="KW-0547">Nucleotide-binding</keyword>
<keyword id="KW-0816">Tricarboxylic acid cycle</keyword>
<accession>A4SND2</accession>
<gene>
    <name evidence="1" type="primary">sucC</name>
    <name type="ordered locus">ASA_2355</name>
</gene>